<accession>Q8KA02</accession>
<reference key="1">
    <citation type="journal article" date="2002" name="Science">
        <title>50 million years of genomic stasis in endosymbiotic bacteria.</title>
        <authorList>
            <person name="Tamas I."/>
            <person name="Klasson L."/>
            <person name="Canbaeck B."/>
            <person name="Naeslund A.K."/>
            <person name="Eriksson A.-S."/>
            <person name="Wernegreen J.J."/>
            <person name="Sandstroem J.P."/>
            <person name="Moran N.A."/>
            <person name="Andersson S.G.E."/>
        </authorList>
    </citation>
    <scope>NUCLEOTIDE SEQUENCE [LARGE SCALE GENOMIC DNA]</scope>
    <source>
        <strain>Sg</strain>
    </source>
</reference>
<sequence>MESWLTSLITQSLTFSILIVGIVSFLESLALVGLLLPGIVFMATLGTFIGNGKLPFYPSWIAGIIGCLLGDWCSYFIGLYFKNWLYSLKFLKKNCHLLDKTKSLLHKHSMITILVGRFIGPTRPLIPMVSGMLKLPLKKFILPSLLGCILWPPIYFFPGIITGITINIPPNPKNDYFKWLLLIIAILIWFGIWLTSKWWKIKKIKNKNNIHFIKRNIGWIALIILSSGIIGLILIQFHPTMIIVRKVFSTIL</sequence>
<dbReference type="EMBL" id="AE013218">
    <property type="protein sequence ID" value="AAM67700.1"/>
    <property type="molecule type" value="Genomic_DNA"/>
</dbReference>
<dbReference type="RefSeq" id="WP_011053667.1">
    <property type="nucleotide sequence ID" value="NC_004061.1"/>
</dbReference>
<dbReference type="STRING" id="198804.BUsg_132"/>
<dbReference type="GeneID" id="93003602"/>
<dbReference type="KEGG" id="bas:BUsg_132"/>
<dbReference type="eggNOG" id="COG0586">
    <property type="taxonomic scope" value="Bacteria"/>
</dbReference>
<dbReference type="HOGENOM" id="CLU_044208_3_2_6"/>
<dbReference type="Proteomes" id="UP000000416">
    <property type="component" value="Chromosome"/>
</dbReference>
<dbReference type="GO" id="GO:0005886">
    <property type="term" value="C:plasma membrane"/>
    <property type="evidence" value="ECO:0007669"/>
    <property type="project" value="UniProtKB-SubCell"/>
</dbReference>
<dbReference type="InterPro" id="IPR032818">
    <property type="entry name" value="DedA-like"/>
</dbReference>
<dbReference type="InterPro" id="IPR032816">
    <property type="entry name" value="VTT_dom"/>
</dbReference>
<dbReference type="PANTHER" id="PTHR30353">
    <property type="entry name" value="INNER MEMBRANE PROTEIN DEDA-RELATED"/>
    <property type="match status" value="1"/>
</dbReference>
<dbReference type="PANTHER" id="PTHR30353:SF15">
    <property type="entry name" value="INNER MEMBRANE PROTEIN YABI"/>
    <property type="match status" value="1"/>
</dbReference>
<dbReference type="Pfam" id="PF09335">
    <property type="entry name" value="VTT_dom"/>
    <property type="match status" value="1"/>
</dbReference>
<gene>
    <name type="ordered locus">BUsg_132</name>
</gene>
<proteinExistence type="inferred from homology"/>
<organism>
    <name type="scientific">Buchnera aphidicola subsp. Schizaphis graminum (strain Sg)</name>
    <dbReference type="NCBI Taxonomy" id="198804"/>
    <lineage>
        <taxon>Bacteria</taxon>
        <taxon>Pseudomonadati</taxon>
        <taxon>Pseudomonadota</taxon>
        <taxon>Gammaproteobacteria</taxon>
        <taxon>Enterobacterales</taxon>
        <taxon>Erwiniaceae</taxon>
        <taxon>Buchnera</taxon>
    </lineage>
</organism>
<keyword id="KW-1003">Cell membrane</keyword>
<keyword id="KW-0472">Membrane</keyword>
<keyword id="KW-0812">Transmembrane</keyword>
<keyword id="KW-1133">Transmembrane helix</keyword>
<name>Y132_BUCAP</name>
<evidence type="ECO:0000255" key="1"/>
<evidence type="ECO:0000305" key="2"/>
<protein>
    <recommendedName>
        <fullName>Uncharacterized membrane protein BUsg_132</fullName>
    </recommendedName>
</protein>
<feature type="chain" id="PRO_0000161425" description="Uncharacterized membrane protein BUsg_132">
    <location>
        <begin position="1"/>
        <end position="252"/>
    </location>
</feature>
<feature type="transmembrane region" description="Helical" evidence="1">
    <location>
        <begin position="5"/>
        <end position="25"/>
    </location>
</feature>
<feature type="transmembrane region" description="Helical" evidence="1">
    <location>
        <begin position="29"/>
        <end position="49"/>
    </location>
</feature>
<feature type="transmembrane region" description="Helical" evidence="1">
    <location>
        <begin position="61"/>
        <end position="81"/>
    </location>
</feature>
<feature type="transmembrane region" description="Helical" evidence="1">
    <location>
        <begin position="141"/>
        <end position="161"/>
    </location>
</feature>
<feature type="transmembrane region" description="Helical" evidence="1">
    <location>
        <begin position="179"/>
        <end position="199"/>
    </location>
</feature>
<feature type="transmembrane region" description="Helical" evidence="1">
    <location>
        <begin position="217"/>
        <end position="237"/>
    </location>
</feature>
<comment type="subcellular location">
    <subcellularLocation>
        <location evidence="2">Cell membrane</location>
        <topology evidence="2">Multi-pass membrane protein</topology>
    </subcellularLocation>
</comment>
<comment type="similarity">
    <text evidence="2">Belongs to the DedA family.</text>
</comment>